<gene>
    <name type="primary">G1L9</name>
    <name type="ordered locus">Os05g0347400</name>
    <name type="ordered locus">LOC_Os05g28040</name>
    <name type="ORF">B1164G01.10</name>
    <name type="ORF">OSJNBb0052F16.2</name>
</gene>
<reference key="1">
    <citation type="journal article" date="2009" name="Proc. Natl. Acad. Sci. U.S.A.">
        <title>The homeotic gene long sterile lemma (G1) specifies sterile lemma identity in the rice spikelet.</title>
        <authorList>
            <person name="Yoshida A."/>
            <person name="Suzaki Y."/>
            <person name="Tanaka W."/>
            <person name="Hirano H.-Y."/>
        </authorList>
    </citation>
    <scope>NUCLEOTIDE SEQUENCE [MRNA]</scope>
    <scope>GENE FAMILY</scope>
    <scope>NOMENCLATURE</scope>
    <source>
        <strain>cv. Nipponbare</strain>
    </source>
</reference>
<reference key="2">
    <citation type="journal article" date="2005" name="Mol. Genet. Genomics">
        <title>A fine physical map of the rice chromosome 5.</title>
        <authorList>
            <person name="Cheng C.-H."/>
            <person name="Chung M.C."/>
            <person name="Liu S.-M."/>
            <person name="Chen S.-K."/>
            <person name="Kao F.Y."/>
            <person name="Lin S.-J."/>
            <person name="Hsiao S.-H."/>
            <person name="Tseng I.C."/>
            <person name="Hsing Y.-I.C."/>
            <person name="Wu H.-P."/>
            <person name="Chen C.-S."/>
            <person name="Shaw J.-F."/>
            <person name="Wu J."/>
            <person name="Matsumoto T."/>
            <person name="Sasaki T."/>
            <person name="Chen H.-C."/>
            <person name="Chow T.-Y."/>
        </authorList>
    </citation>
    <scope>NUCLEOTIDE SEQUENCE [LARGE SCALE GENOMIC DNA]</scope>
    <source>
        <strain>cv. Nipponbare</strain>
    </source>
</reference>
<reference key="3">
    <citation type="journal article" date="2005" name="Nature">
        <title>The map-based sequence of the rice genome.</title>
        <authorList>
            <consortium name="International rice genome sequencing project (IRGSP)"/>
        </authorList>
    </citation>
    <scope>NUCLEOTIDE SEQUENCE [LARGE SCALE GENOMIC DNA]</scope>
    <source>
        <strain>cv. Nipponbare</strain>
    </source>
</reference>
<reference key="4">
    <citation type="journal article" date="2008" name="Nucleic Acids Res.">
        <title>The rice annotation project database (RAP-DB): 2008 update.</title>
        <authorList>
            <consortium name="The rice annotation project (RAP)"/>
        </authorList>
    </citation>
    <scope>GENOME REANNOTATION</scope>
    <source>
        <strain>cv. Nipponbare</strain>
    </source>
</reference>
<reference key="5">
    <citation type="journal article" date="2013" name="Rice">
        <title>Improvement of the Oryza sativa Nipponbare reference genome using next generation sequence and optical map data.</title>
        <authorList>
            <person name="Kawahara Y."/>
            <person name="de la Bastide M."/>
            <person name="Hamilton J.P."/>
            <person name="Kanamori H."/>
            <person name="McCombie W.R."/>
            <person name="Ouyang S."/>
            <person name="Schwartz D.C."/>
            <person name="Tanaka T."/>
            <person name="Wu J."/>
            <person name="Zhou S."/>
            <person name="Childs K.L."/>
            <person name="Davidson R.M."/>
            <person name="Lin H."/>
            <person name="Quesada-Ocampo L."/>
            <person name="Vaillancourt B."/>
            <person name="Sakai H."/>
            <person name="Lee S.S."/>
            <person name="Kim J."/>
            <person name="Numa H."/>
            <person name="Itoh T."/>
            <person name="Buell C.R."/>
            <person name="Matsumoto T."/>
        </authorList>
    </citation>
    <scope>GENOME REANNOTATION</scope>
    <source>
        <strain>cv. Nipponbare</strain>
    </source>
</reference>
<reference key="6">
    <citation type="journal article" date="2003" name="Science">
        <title>Collection, mapping, and annotation of over 28,000 cDNA clones from japonica rice.</title>
        <authorList>
            <consortium name="The rice full-length cDNA consortium"/>
        </authorList>
    </citation>
    <scope>NUCLEOTIDE SEQUENCE [LARGE SCALE MRNA]</scope>
    <source>
        <strain>cv. Nipponbare</strain>
    </source>
</reference>
<reference key="7">
    <citation type="journal article" date="2012" name="Biol. Direct">
        <title>ALOG domains: provenance of plant homeotic and developmental regulators from the DNA-binding domain of a novel class of DIRS1-type retroposons.</title>
        <authorList>
            <person name="Iyer L.M."/>
            <person name="Aravind L."/>
        </authorList>
    </citation>
    <scope>DNA-BINDING</scope>
    <scope>GENE FAMILY</scope>
</reference>
<feature type="chain" id="PRO_0000425314" description="Protein G1-like9">
    <location>
        <begin position="1"/>
        <end position="284"/>
    </location>
</feature>
<feature type="domain" description="ALOG" evidence="2">
    <location>
        <begin position="67"/>
        <end position="194"/>
    </location>
</feature>
<feature type="region of interest" description="Disordered" evidence="3">
    <location>
        <begin position="1"/>
        <end position="69"/>
    </location>
</feature>
<feature type="region of interest" description="Disordered" evidence="3">
    <location>
        <begin position="209"/>
        <end position="284"/>
    </location>
</feature>
<feature type="short sequence motif" description="Nuclear localization signal" evidence="1">
    <location>
        <begin position="192"/>
        <end position="196"/>
    </location>
</feature>
<feature type="compositionally biased region" description="Low complexity" evidence="3">
    <location>
        <begin position="13"/>
        <end position="32"/>
    </location>
</feature>
<feature type="compositionally biased region" description="Low complexity" evidence="3">
    <location>
        <begin position="40"/>
        <end position="63"/>
    </location>
</feature>
<feature type="compositionally biased region" description="Low complexity" evidence="3">
    <location>
        <begin position="246"/>
        <end position="284"/>
    </location>
</feature>
<keyword id="KW-0217">Developmental protein</keyword>
<keyword id="KW-0238">DNA-binding</keyword>
<keyword id="KW-0539">Nucleus</keyword>
<keyword id="KW-1185">Reference proteome</keyword>
<keyword id="KW-0804">Transcription</keyword>
<keyword id="KW-0805">Transcription regulation</keyword>
<evidence type="ECO:0000250" key="1"/>
<evidence type="ECO:0000255" key="2">
    <source>
        <dbReference type="PROSITE-ProRule" id="PRU01033"/>
    </source>
</evidence>
<evidence type="ECO:0000256" key="3">
    <source>
        <dbReference type="SAM" id="MobiDB-lite"/>
    </source>
</evidence>
<evidence type="ECO:0000305" key="4"/>
<comment type="function">
    <text evidence="1">Probable transcription regulator that acts as a developmental regulator by promoting cell growth in response to light.</text>
</comment>
<comment type="subcellular location">
    <subcellularLocation>
        <location evidence="1">Nucleus</location>
    </subcellularLocation>
</comment>
<comment type="similarity">
    <text evidence="4">Belongs to the plant homeotic and developmental regulators ALOG protein family.</text>
</comment>
<dbReference type="EMBL" id="AB512498">
    <property type="protein sequence ID" value="BAI52987.1"/>
    <property type="molecule type" value="mRNA"/>
</dbReference>
<dbReference type="EMBL" id="AC134928">
    <property type="protein sequence ID" value="AAV43818.1"/>
    <property type="molecule type" value="Genomic_DNA"/>
</dbReference>
<dbReference type="EMBL" id="AC144742">
    <property type="protein sequence ID" value="AAV44098.1"/>
    <property type="molecule type" value="Genomic_DNA"/>
</dbReference>
<dbReference type="EMBL" id="AP008211">
    <property type="protein sequence ID" value="BAF17180.1"/>
    <property type="molecule type" value="Genomic_DNA"/>
</dbReference>
<dbReference type="EMBL" id="AP014961">
    <property type="protein sequence ID" value="BAS93508.1"/>
    <property type="molecule type" value="Genomic_DNA"/>
</dbReference>
<dbReference type="EMBL" id="AK106384">
    <property type="protein sequence ID" value="BAG97704.1"/>
    <property type="molecule type" value="mRNA"/>
</dbReference>
<dbReference type="RefSeq" id="XP_015638042.1">
    <property type="nucleotide sequence ID" value="XM_015782556.1"/>
</dbReference>
<dbReference type="SMR" id="Q5W659"/>
<dbReference type="PaxDb" id="39947-Q5W659"/>
<dbReference type="EnsemblPlants" id="Os05t0347400-01">
    <property type="protein sequence ID" value="Os05t0347400-01"/>
    <property type="gene ID" value="Os05g0347400"/>
</dbReference>
<dbReference type="Gramene" id="Os05t0347400-01">
    <property type="protein sequence ID" value="Os05t0347400-01"/>
    <property type="gene ID" value="Os05g0347400"/>
</dbReference>
<dbReference type="KEGG" id="dosa:Os05g0347400"/>
<dbReference type="eggNOG" id="ENOG502QPZE">
    <property type="taxonomic scope" value="Eukaryota"/>
</dbReference>
<dbReference type="HOGENOM" id="CLU_071168_2_1_1"/>
<dbReference type="InParanoid" id="Q5W659"/>
<dbReference type="OrthoDB" id="1906822at2759"/>
<dbReference type="Proteomes" id="UP000000763">
    <property type="component" value="Chromosome 5"/>
</dbReference>
<dbReference type="Proteomes" id="UP000059680">
    <property type="component" value="Chromosome 5"/>
</dbReference>
<dbReference type="GO" id="GO:0005634">
    <property type="term" value="C:nucleus"/>
    <property type="evidence" value="ECO:0000250"/>
    <property type="project" value="UniProtKB"/>
</dbReference>
<dbReference type="GO" id="GO:0003677">
    <property type="term" value="F:DNA binding"/>
    <property type="evidence" value="ECO:0007669"/>
    <property type="project" value="UniProtKB-KW"/>
</dbReference>
<dbReference type="GO" id="GO:0009299">
    <property type="term" value="P:mRNA transcription"/>
    <property type="evidence" value="ECO:0000250"/>
    <property type="project" value="UniProtKB"/>
</dbReference>
<dbReference type="GO" id="GO:0090698">
    <property type="term" value="P:post-embryonic plant morphogenesis"/>
    <property type="evidence" value="ECO:0000250"/>
    <property type="project" value="UniProtKB"/>
</dbReference>
<dbReference type="GO" id="GO:0009416">
    <property type="term" value="P:response to light stimulus"/>
    <property type="evidence" value="ECO:0000318"/>
    <property type="project" value="GO_Central"/>
</dbReference>
<dbReference type="InterPro" id="IPR040222">
    <property type="entry name" value="ALOG"/>
</dbReference>
<dbReference type="InterPro" id="IPR006936">
    <property type="entry name" value="ALOG_dom"/>
</dbReference>
<dbReference type="PANTHER" id="PTHR31165">
    <property type="entry name" value="PROTEIN G1-LIKE2"/>
    <property type="match status" value="1"/>
</dbReference>
<dbReference type="PANTHER" id="PTHR31165:SF59">
    <property type="entry name" value="PROTEIN LIGHT-DEPENDENT SHORT HYPOCOTYLS 6"/>
    <property type="match status" value="1"/>
</dbReference>
<dbReference type="Pfam" id="PF04852">
    <property type="entry name" value="ALOG_dom"/>
    <property type="match status" value="1"/>
</dbReference>
<dbReference type="PROSITE" id="PS51697">
    <property type="entry name" value="ALOG"/>
    <property type="match status" value="1"/>
</dbReference>
<accession>Q5W659</accession>
<accession>A0A0P0WLA5</accession>
<protein>
    <recommendedName>
        <fullName>Protein G1-like9</fullName>
    </recommendedName>
</protein>
<name>G1L9_ORYSJ</name>
<proteinExistence type="evidence at protein level"/>
<sequence length="284" mass="29440">MEPSPDAPRAGAAEEQPGPSSSASAPAPAASSNEEEGRHQSQAQQQVQEAQPQPLAQQAPAAAGLSRYESQKRRDWNTFLQYLRNHKPPLTLPRCSGAHVIEFLKYLDQFGKTKVHADGCAYFGEPNPPAPCACPLRQAWGSLDALIGRLRAAYEESGGRPESNPFAARAVRIYLREVREAQAKARGIPYEKKRKRGAAAAAAAPPVVVAPPPVVTAPDDATGTSGGAGEDDDDDEATHSGEQQDTTPAASPTTPPATSVGTTTAAATAAAAKGSAAKGSATSS</sequence>
<organism>
    <name type="scientific">Oryza sativa subsp. japonica</name>
    <name type="common">Rice</name>
    <dbReference type="NCBI Taxonomy" id="39947"/>
    <lineage>
        <taxon>Eukaryota</taxon>
        <taxon>Viridiplantae</taxon>
        <taxon>Streptophyta</taxon>
        <taxon>Embryophyta</taxon>
        <taxon>Tracheophyta</taxon>
        <taxon>Spermatophyta</taxon>
        <taxon>Magnoliopsida</taxon>
        <taxon>Liliopsida</taxon>
        <taxon>Poales</taxon>
        <taxon>Poaceae</taxon>
        <taxon>BOP clade</taxon>
        <taxon>Oryzoideae</taxon>
        <taxon>Oryzeae</taxon>
        <taxon>Oryzinae</taxon>
        <taxon>Oryza</taxon>
        <taxon>Oryza sativa</taxon>
    </lineage>
</organism>